<reference key="1">
    <citation type="submission" date="2006-03" db="EMBL/GenBank/DDBJ databases">
        <authorList>
            <consortium name="Sanger Xenopus tropicalis EST/cDNA project"/>
        </authorList>
    </citation>
    <scope>NUCLEOTIDE SEQUENCE [LARGE SCALE MRNA]</scope>
    <source>
        <tissue>Egg</tissue>
    </source>
</reference>
<reference key="2">
    <citation type="submission" date="2004-10" db="EMBL/GenBank/DDBJ databases">
        <authorList>
            <consortium name="NIH - Xenopus Gene Collection (XGC) project"/>
        </authorList>
    </citation>
    <scope>NUCLEOTIDE SEQUENCE [LARGE SCALE MRNA]</scope>
    <source>
        <tissue>Embryo</tissue>
    </source>
</reference>
<sequence>MGNGMNKILPSLFIGNFKDARDVEQLHKNNITHILSIHDSARPMLEGMKYLCIPASDSPSQNLIQHFKDSIAFIHECRLKGEGCLVHCLAGVSRSVTLVVAYVMTVTDFGWEDALSAVRGARTCANPNMGFQKQLEDFGKHDVYQFRTWLKETYGENPFNDKDDAKQLLDKHKQQEAAESQSATSSGRQWSSHLTSLSSMSYSNYTTET</sequence>
<evidence type="ECO:0000250" key="1"/>
<evidence type="ECO:0000255" key="2">
    <source>
        <dbReference type="PROSITE-ProRule" id="PRU00160"/>
    </source>
</evidence>
<evidence type="ECO:0000256" key="3">
    <source>
        <dbReference type="SAM" id="MobiDB-lite"/>
    </source>
</evidence>
<evidence type="ECO:0000305" key="4"/>
<protein>
    <recommendedName>
        <fullName>Dual specificity protein phosphatase 22</fullName>
        <ecNumber>3.1.3.16</ecNumber>
        <ecNumber>3.1.3.48</ecNumber>
    </recommendedName>
</protein>
<organism>
    <name type="scientific">Xenopus tropicalis</name>
    <name type="common">Western clawed frog</name>
    <name type="synonym">Silurana tropicalis</name>
    <dbReference type="NCBI Taxonomy" id="8364"/>
    <lineage>
        <taxon>Eukaryota</taxon>
        <taxon>Metazoa</taxon>
        <taxon>Chordata</taxon>
        <taxon>Craniata</taxon>
        <taxon>Vertebrata</taxon>
        <taxon>Euteleostomi</taxon>
        <taxon>Amphibia</taxon>
        <taxon>Batrachia</taxon>
        <taxon>Anura</taxon>
        <taxon>Pipoidea</taxon>
        <taxon>Pipidae</taxon>
        <taxon>Xenopodinae</taxon>
        <taxon>Xenopus</taxon>
        <taxon>Silurana</taxon>
    </lineage>
</organism>
<comment type="function">
    <text evidence="1">Activates the Jnk signaling pathway. Dephosphorylates and deactivates p38 and stress-activated protein kinase/c-Jun N-terminal kinase (SAPK/JNK) (By similarity).</text>
</comment>
<comment type="catalytic activity">
    <reaction>
        <text>O-phospho-L-tyrosyl-[protein] + H2O = L-tyrosyl-[protein] + phosphate</text>
        <dbReference type="Rhea" id="RHEA:10684"/>
        <dbReference type="Rhea" id="RHEA-COMP:10136"/>
        <dbReference type="Rhea" id="RHEA-COMP:20101"/>
        <dbReference type="ChEBI" id="CHEBI:15377"/>
        <dbReference type="ChEBI" id="CHEBI:43474"/>
        <dbReference type="ChEBI" id="CHEBI:46858"/>
        <dbReference type="ChEBI" id="CHEBI:61978"/>
        <dbReference type="EC" id="3.1.3.48"/>
    </reaction>
</comment>
<comment type="catalytic activity">
    <reaction>
        <text>O-phospho-L-seryl-[protein] + H2O = L-seryl-[protein] + phosphate</text>
        <dbReference type="Rhea" id="RHEA:20629"/>
        <dbReference type="Rhea" id="RHEA-COMP:9863"/>
        <dbReference type="Rhea" id="RHEA-COMP:11604"/>
        <dbReference type="ChEBI" id="CHEBI:15377"/>
        <dbReference type="ChEBI" id="CHEBI:29999"/>
        <dbReference type="ChEBI" id="CHEBI:43474"/>
        <dbReference type="ChEBI" id="CHEBI:83421"/>
        <dbReference type="EC" id="3.1.3.16"/>
    </reaction>
</comment>
<comment type="catalytic activity">
    <reaction>
        <text>O-phospho-L-threonyl-[protein] + H2O = L-threonyl-[protein] + phosphate</text>
        <dbReference type="Rhea" id="RHEA:47004"/>
        <dbReference type="Rhea" id="RHEA-COMP:11060"/>
        <dbReference type="Rhea" id="RHEA-COMP:11605"/>
        <dbReference type="ChEBI" id="CHEBI:15377"/>
        <dbReference type="ChEBI" id="CHEBI:30013"/>
        <dbReference type="ChEBI" id="CHEBI:43474"/>
        <dbReference type="ChEBI" id="CHEBI:61977"/>
        <dbReference type="EC" id="3.1.3.16"/>
    </reaction>
</comment>
<comment type="subcellular location">
    <subcellularLocation>
        <location evidence="1">Cytoplasm</location>
    </subcellularLocation>
    <subcellularLocation>
        <location evidence="1">Nucleus</location>
    </subcellularLocation>
</comment>
<comment type="similarity">
    <text evidence="4">Belongs to the protein-tyrosine phosphatase family. Non-receptor class dual specificity subfamily.</text>
</comment>
<name>DUS22_XENTR</name>
<feature type="chain" id="PRO_0000244755" description="Dual specificity protein phosphatase 22">
    <location>
        <begin position="1"/>
        <end position="209"/>
    </location>
</feature>
<feature type="domain" description="Tyrosine-protein phosphatase" evidence="2">
    <location>
        <begin position="4"/>
        <end position="144"/>
    </location>
</feature>
<feature type="region of interest" description="Disordered" evidence="3">
    <location>
        <begin position="170"/>
        <end position="193"/>
    </location>
</feature>
<feature type="compositionally biased region" description="Low complexity" evidence="3">
    <location>
        <begin position="177"/>
        <end position="193"/>
    </location>
</feature>
<feature type="active site" description="Phosphocysteine intermediate" evidence="2">
    <location>
        <position position="88"/>
    </location>
</feature>
<dbReference type="EC" id="3.1.3.16"/>
<dbReference type="EC" id="3.1.3.48"/>
<dbReference type="EMBL" id="CR762123">
    <property type="protein sequence ID" value="CAJ81898.1"/>
    <property type="molecule type" value="mRNA"/>
</dbReference>
<dbReference type="EMBL" id="BC084150">
    <property type="protein sequence ID" value="AAH84150.1"/>
    <property type="molecule type" value="mRNA"/>
</dbReference>
<dbReference type="RefSeq" id="NP_001011043.1">
    <property type="nucleotide sequence ID" value="NM_001011043.2"/>
</dbReference>
<dbReference type="SMR" id="Q5XHB2"/>
<dbReference type="FunCoup" id="Q5XHB2">
    <property type="interactions" value="275"/>
</dbReference>
<dbReference type="STRING" id="8364.ENSXETP00000033670"/>
<dbReference type="PaxDb" id="8364-ENSXETP00000024913"/>
<dbReference type="GeneID" id="496452"/>
<dbReference type="KEGG" id="xtr:496452"/>
<dbReference type="AGR" id="Xenbase:XB-GENE-486791"/>
<dbReference type="CTD" id="56940"/>
<dbReference type="Xenbase" id="XB-GENE-486791">
    <property type="gene designation" value="dusp22"/>
</dbReference>
<dbReference type="eggNOG" id="KOG1716">
    <property type="taxonomic scope" value="Eukaryota"/>
</dbReference>
<dbReference type="HOGENOM" id="CLU_027074_5_0_1"/>
<dbReference type="InParanoid" id="Q5XHB2"/>
<dbReference type="OrthoDB" id="9979246at2759"/>
<dbReference type="Proteomes" id="UP000008143">
    <property type="component" value="Chromosome 6"/>
</dbReference>
<dbReference type="Bgee" id="ENSXETG00000011414">
    <property type="expression patterns" value="Expressed in egg cell and 17 other cell types or tissues"/>
</dbReference>
<dbReference type="ExpressionAtlas" id="Q5XHB2">
    <property type="expression patterns" value="differential"/>
</dbReference>
<dbReference type="GO" id="GO:0005737">
    <property type="term" value="C:cytoplasm"/>
    <property type="evidence" value="ECO:0007669"/>
    <property type="project" value="UniProtKB-SubCell"/>
</dbReference>
<dbReference type="GO" id="GO:0005634">
    <property type="term" value="C:nucleus"/>
    <property type="evidence" value="ECO:0007669"/>
    <property type="project" value="UniProtKB-SubCell"/>
</dbReference>
<dbReference type="GO" id="GO:0004722">
    <property type="term" value="F:protein serine/threonine phosphatase activity"/>
    <property type="evidence" value="ECO:0007669"/>
    <property type="project" value="UniProtKB-EC"/>
</dbReference>
<dbReference type="GO" id="GO:0004725">
    <property type="term" value="F:protein tyrosine phosphatase activity"/>
    <property type="evidence" value="ECO:0007669"/>
    <property type="project" value="UniProtKB-EC"/>
</dbReference>
<dbReference type="CDD" id="cd14581">
    <property type="entry name" value="DUSP22"/>
    <property type="match status" value="1"/>
</dbReference>
<dbReference type="FunFam" id="3.90.190.10:FF:000048">
    <property type="entry name" value="dual specificity protein phosphatase 22 isoform X1"/>
    <property type="match status" value="1"/>
</dbReference>
<dbReference type="Gene3D" id="3.90.190.10">
    <property type="entry name" value="Protein tyrosine phosphatase superfamily"/>
    <property type="match status" value="1"/>
</dbReference>
<dbReference type="InterPro" id="IPR000340">
    <property type="entry name" value="Dual-sp_phosphatase_cat-dom"/>
</dbReference>
<dbReference type="InterPro" id="IPR029021">
    <property type="entry name" value="Prot-tyrosine_phosphatase-like"/>
</dbReference>
<dbReference type="InterPro" id="IPR000387">
    <property type="entry name" value="Tyr_Pase_dom"/>
</dbReference>
<dbReference type="InterPro" id="IPR020422">
    <property type="entry name" value="TYR_PHOSPHATASE_DUAL_dom"/>
</dbReference>
<dbReference type="PANTHER" id="PTHR45948:SF3">
    <property type="entry name" value="DUAL SPECIFICITY PROTEIN PHOSPHATASE 22"/>
    <property type="match status" value="1"/>
</dbReference>
<dbReference type="PANTHER" id="PTHR45948">
    <property type="entry name" value="DUAL SPECIFICITY PROTEIN PHOSPHATASE DDB_G0269404-RELATED"/>
    <property type="match status" value="1"/>
</dbReference>
<dbReference type="Pfam" id="PF00782">
    <property type="entry name" value="DSPc"/>
    <property type="match status" value="1"/>
</dbReference>
<dbReference type="PRINTS" id="PR01908">
    <property type="entry name" value="ADSPHPHTASE"/>
</dbReference>
<dbReference type="SMART" id="SM00195">
    <property type="entry name" value="DSPc"/>
    <property type="match status" value="1"/>
</dbReference>
<dbReference type="SUPFAM" id="SSF52799">
    <property type="entry name" value="(Phosphotyrosine protein) phosphatases II"/>
    <property type="match status" value="1"/>
</dbReference>
<dbReference type="PROSITE" id="PS50056">
    <property type="entry name" value="TYR_PHOSPHATASE_2"/>
    <property type="match status" value="1"/>
</dbReference>
<dbReference type="PROSITE" id="PS50054">
    <property type="entry name" value="TYR_PHOSPHATASE_DUAL"/>
    <property type="match status" value="1"/>
</dbReference>
<keyword id="KW-0963">Cytoplasm</keyword>
<keyword id="KW-0378">Hydrolase</keyword>
<keyword id="KW-0539">Nucleus</keyword>
<keyword id="KW-0904">Protein phosphatase</keyword>
<keyword id="KW-1185">Reference proteome</keyword>
<gene>
    <name type="primary">dusp22</name>
    <name type="ORF">TEgg009e03.1</name>
</gene>
<accession>Q5XHB2</accession>
<proteinExistence type="evidence at transcript level"/>